<evidence type="ECO:0000250" key="1"/>
<evidence type="ECO:0000250" key="2">
    <source>
        <dbReference type="UniProtKB" id="Q13093"/>
    </source>
</evidence>
<evidence type="ECO:0000255" key="3"/>
<evidence type="ECO:0000255" key="4">
    <source>
        <dbReference type="PROSITE-ProRule" id="PRU10037"/>
    </source>
</evidence>
<evidence type="ECO:0000269" key="5">
    <source>
    </source>
</evidence>
<evidence type="ECO:0000269" key="6">
    <source>
    </source>
</evidence>
<evidence type="ECO:0000269" key="7">
    <source>
    </source>
</evidence>
<evidence type="ECO:0000305" key="8"/>
<evidence type="ECO:0000305" key="9">
    <source>
    </source>
</evidence>
<evidence type="ECO:0000305" key="10">
    <source>
    </source>
</evidence>
<reference key="1">
    <citation type="journal article" date="1995" name="J. Biol. Chem.">
        <title>Plasma platelet-activating factor acetylhydrolase is a secreted phospholipase A2 with a catalytic triad.</title>
        <authorList>
            <person name="Tjoelker L.W."/>
            <person name="Eberhardt C."/>
            <person name="Unger J."/>
            <person name="le Trong H."/>
            <person name="Zimmerman G.A."/>
            <person name="McIntyre T.M."/>
            <person name="Stafforini D.M."/>
            <person name="Prescott S.M."/>
            <person name="Gray P.W."/>
        </authorList>
    </citation>
    <scope>NUCLEOTIDE SEQUENCE [MRNA]</scope>
    <source>
        <tissue>Spleen</tissue>
    </source>
</reference>
<reference key="2">
    <citation type="journal article" date="2005" name="Science">
        <title>The transcriptional landscape of the mammalian genome.</title>
        <authorList>
            <person name="Carninci P."/>
            <person name="Kasukawa T."/>
            <person name="Katayama S."/>
            <person name="Gough J."/>
            <person name="Frith M.C."/>
            <person name="Maeda N."/>
            <person name="Oyama R."/>
            <person name="Ravasi T."/>
            <person name="Lenhard B."/>
            <person name="Wells C."/>
            <person name="Kodzius R."/>
            <person name="Shimokawa K."/>
            <person name="Bajic V.B."/>
            <person name="Brenner S.E."/>
            <person name="Batalov S."/>
            <person name="Forrest A.R."/>
            <person name="Zavolan M."/>
            <person name="Davis M.J."/>
            <person name="Wilming L.G."/>
            <person name="Aidinis V."/>
            <person name="Allen J.E."/>
            <person name="Ambesi-Impiombato A."/>
            <person name="Apweiler R."/>
            <person name="Aturaliya R.N."/>
            <person name="Bailey T.L."/>
            <person name="Bansal M."/>
            <person name="Baxter L."/>
            <person name="Beisel K.W."/>
            <person name="Bersano T."/>
            <person name="Bono H."/>
            <person name="Chalk A.M."/>
            <person name="Chiu K.P."/>
            <person name="Choudhary V."/>
            <person name="Christoffels A."/>
            <person name="Clutterbuck D.R."/>
            <person name="Crowe M.L."/>
            <person name="Dalla E."/>
            <person name="Dalrymple B.P."/>
            <person name="de Bono B."/>
            <person name="Della Gatta G."/>
            <person name="di Bernardo D."/>
            <person name="Down T."/>
            <person name="Engstrom P."/>
            <person name="Fagiolini M."/>
            <person name="Faulkner G."/>
            <person name="Fletcher C.F."/>
            <person name="Fukushima T."/>
            <person name="Furuno M."/>
            <person name="Futaki S."/>
            <person name="Gariboldi M."/>
            <person name="Georgii-Hemming P."/>
            <person name="Gingeras T.R."/>
            <person name="Gojobori T."/>
            <person name="Green R.E."/>
            <person name="Gustincich S."/>
            <person name="Harbers M."/>
            <person name="Hayashi Y."/>
            <person name="Hensch T.K."/>
            <person name="Hirokawa N."/>
            <person name="Hill D."/>
            <person name="Huminiecki L."/>
            <person name="Iacono M."/>
            <person name="Ikeo K."/>
            <person name="Iwama A."/>
            <person name="Ishikawa T."/>
            <person name="Jakt M."/>
            <person name="Kanapin A."/>
            <person name="Katoh M."/>
            <person name="Kawasawa Y."/>
            <person name="Kelso J."/>
            <person name="Kitamura H."/>
            <person name="Kitano H."/>
            <person name="Kollias G."/>
            <person name="Krishnan S.P."/>
            <person name="Kruger A."/>
            <person name="Kummerfeld S.K."/>
            <person name="Kurochkin I.V."/>
            <person name="Lareau L.F."/>
            <person name="Lazarevic D."/>
            <person name="Lipovich L."/>
            <person name="Liu J."/>
            <person name="Liuni S."/>
            <person name="McWilliam S."/>
            <person name="Madan Babu M."/>
            <person name="Madera M."/>
            <person name="Marchionni L."/>
            <person name="Matsuda H."/>
            <person name="Matsuzawa S."/>
            <person name="Miki H."/>
            <person name="Mignone F."/>
            <person name="Miyake S."/>
            <person name="Morris K."/>
            <person name="Mottagui-Tabar S."/>
            <person name="Mulder N."/>
            <person name="Nakano N."/>
            <person name="Nakauchi H."/>
            <person name="Ng P."/>
            <person name="Nilsson R."/>
            <person name="Nishiguchi S."/>
            <person name="Nishikawa S."/>
            <person name="Nori F."/>
            <person name="Ohara O."/>
            <person name="Okazaki Y."/>
            <person name="Orlando V."/>
            <person name="Pang K.C."/>
            <person name="Pavan W.J."/>
            <person name="Pavesi G."/>
            <person name="Pesole G."/>
            <person name="Petrovsky N."/>
            <person name="Piazza S."/>
            <person name="Reed J."/>
            <person name="Reid J.F."/>
            <person name="Ring B.Z."/>
            <person name="Ringwald M."/>
            <person name="Rost B."/>
            <person name="Ruan Y."/>
            <person name="Salzberg S.L."/>
            <person name="Sandelin A."/>
            <person name="Schneider C."/>
            <person name="Schoenbach C."/>
            <person name="Sekiguchi K."/>
            <person name="Semple C.A."/>
            <person name="Seno S."/>
            <person name="Sessa L."/>
            <person name="Sheng Y."/>
            <person name="Shibata Y."/>
            <person name="Shimada H."/>
            <person name="Shimada K."/>
            <person name="Silva D."/>
            <person name="Sinclair B."/>
            <person name="Sperling S."/>
            <person name="Stupka E."/>
            <person name="Sugiura K."/>
            <person name="Sultana R."/>
            <person name="Takenaka Y."/>
            <person name="Taki K."/>
            <person name="Tammoja K."/>
            <person name="Tan S.L."/>
            <person name="Tang S."/>
            <person name="Taylor M.S."/>
            <person name="Tegner J."/>
            <person name="Teichmann S.A."/>
            <person name="Ueda H.R."/>
            <person name="van Nimwegen E."/>
            <person name="Verardo R."/>
            <person name="Wei C.L."/>
            <person name="Yagi K."/>
            <person name="Yamanishi H."/>
            <person name="Zabarovsky E."/>
            <person name="Zhu S."/>
            <person name="Zimmer A."/>
            <person name="Hide W."/>
            <person name="Bult C."/>
            <person name="Grimmond S.M."/>
            <person name="Teasdale R.D."/>
            <person name="Liu E.T."/>
            <person name="Brusic V."/>
            <person name="Quackenbush J."/>
            <person name="Wahlestedt C."/>
            <person name="Mattick J.S."/>
            <person name="Hume D.A."/>
            <person name="Kai C."/>
            <person name="Sasaki D."/>
            <person name="Tomaru Y."/>
            <person name="Fukuda S."/>
            <person name="Kanamori-Katayama M."/>
            <person name="Suzuki M."/>
            <person name="Aoki J."/>
            <person name="Arakawa T."/>
            <person name="Iida J."/>
            <person name="Imamura K."/>
            <person name="Itoh M."/>
            <person name="Kato T."/>
            <person name="Kawaji H."/>
            <person name="Kawagashira N."/>
            <person name="Kawashima T."/>
            <person name="Kojima M."/>
            <person name="Kondo S."/>
            <person name="Konno H."/>
            <person name="Nakano K."/>
            <person name="Ninomiya N."/>
            <person name="Nishio T."/>
            <person name="Okada M."/>
            <person name="Plessy C."/>
            <person name="Shibata K."/>
            <person name="Shiraki T."/>
            <person name="Suzuki S."/>
            <person name="Tagami M."/>
            <person name="Waki K."/>
            <person name="Watahiki A."/>
            <person name="Okamura-Oho Y."/>
            <person name="Suzuki H."/>
            <person name="Kawai J."/>
            <person name="Hayashizaki Y."/>
        </authorList>
    </citation>
    <scope>NUCLEOTIDE SEQUENCE [LARGE SCALE MRNA]</scope>
    <source>
        <strain>C57BL/6J</strain>
        <tissue>Spinal ganglion</tissue>
    </source>
</reference>
<reference key="3">
    <citation type="journal article" date="2009" name="PLoS Biol.">
        <title>Lineage-specific biology revealed by a finished genome assembly of the mouse.</title>
        <authorList>
            <person name="Church D.M."/>
            <person name="Goodstadt L."/>
            <person name="Hillier L.W."/>
            <person name="Zody M.C."/>
            <person name="Goldstein S."/>
            <person name="She X."/>
            <person name="Bult C.J."/>
            <person name="Agarwala R."/>
            <person name="Cherry J.L."/>
            <person name="DiCuccio M."/>
            <person name="Hlavina W."/>
            <person name="Kapustin Y."/>
            <person name="Meric P."/>
            <person name="Maglott D."/>
            <person name="Birtle Z."/>
            <person name="Marques A.C."/>
            <person name="Graves T."/>
            <person name="Zhou S."/>
            <person name="Teague B."/>
            <person name="Potamousis K."/>
            <person name="Churas C."/>
            <person name="Place M."/>
            <person name="Herschleb J."/>
            <person name="Runnheim R."/>
            <person name="Forrest D."/>
            <person name="Amos-Landgraf J."/>
            <person name="Schwartz D.C."/>
            <person name="Cheng Z."/>
            <person name="Lindblad-Toh K."/>
            <person name="Eichler E.E."/>
            <person name="Ponting C.P."/>
        </authorList>
    </citation>
    <scope>NUCLEOTIDE SEQUENCE [LARGE SCALE GENOMIC DNA]</scope>
    <source>
        <strain>C57BL/6J</strain>
    </source>
</reference>
<reference key="4">
    <citation type="submission" date="2005-07" db="EMBL/GenBank/DDBJ databases">
        <authorList>
            <person name="Mural R.J."/>
            <person name="Adams M.D."/>
            <person name="Myers E.W."/>
            <person name="Smith H.O."/>
            <person name="Venter J.C."/>
        </authorList>
    </citation>
    <scope>NUCLEOTIDE SEQUENCE [LARGE SCALE GENOMIC DNA]</scope>
</reference>
<reference key="5">
    <citation type="journal article" date="2004" name="Genome Res.">
        <title>The status, quality, and expansion of the NIH full-length cDNA project: the Mammalian Gene Collection (MGC).</title>
        <authorList>
            <consortium name="The MGC Project Team"/>
        </authorList>
    </citation>
    <scope>NUCLEOTIDE SEQUENCE [LARGE SCALE MRNA]</scope>
    <source>
        <strain>FVB/N</strain>
        <tissue>Mammary tumor</tissue>
    </source>
</reference>
<reference key="6">
    <citation type="journal article" date="1999" name="J. Biol. Chem.">
        <title>Molecular basis of the interaction between plasma platelet-activating factor acetylhydrolase and low density lipoprotein.</title>
        <authorList>
            <person name="Stafforini D.M."/>
            <person name="Tjoelker L.W."/>
            <person name="McCormick S.P."/>
            <person name="Vaitkus D."/>
            <person name="McIntyre T.M."/>
            <person name="Gray P.W."/>
            <person name="Young S.G."/>
            <person name="Prescott S.M."/>
        </authorList>
    </citation>
    <scope>FUNCTION AND CATALYTIC ACTIVITY</scope>
</reference>
<reference key="7">
    <citation type="journal article" date="2008" name="J. Biol. Chem.">
        <title>Identification of a domain that mediates association of platelet-activating factor acetylhydrolase with high density lipoprotein.</title>
        <authorList>
            <person name="Gardner A.A."/>
            <person name="Reichert E.C."/>
            <person name="Topham M.K."/>
            <person name="Stafforini D.M."/>
        </authorList>
    </citation>
    <scope>FUNCTION</scope>
    <scope>CATALYTIC ACTIVITY</scope>
    <scope>SUBCELLULAR LOCATION</scope>
    <scope>TISSUE SPECIFICITY</scope>
</reference>
<reference key="8">
    <citation type="journal article" date="2010" name="Pediatr. Res.">
        <title>Dual roles of endogenous platelet-activating factor acetylhydrolase in a murine model of necrotizing enterocolitis.</title>
        <authorList>
            <person name="Lu J."/>
            <person name="Pierce M."/>
            <person name="Franklin A."/>
            <person name="Jilling T."/>
            <person name="Stafforini D.M."/>
            <person name="Caplan M."/>
        </authorList>
    </citation>
    <scope>DISRUPTION PHENOTYPE</scope>
</reference>
<sequence length="440" mass="49258">MVPLKLQALFCLLCCLPWVHPFHWQDTSSFDFRPSVMFHKLQSVMSAAGSGHSKIPKGNGSYPVGCTDLMFGYGNESVFVRLYYPAQDQGRLDTVWIPNKEYFLGLSIFLGTPSIVGNILHLLYGSLTTPASWNSPLRTGEKYPLIVFSHGLGAFRTIYSAIGIGLASNGFIVATVEHRDRSASATYFFEDQVAAKVENRSWLYLRKVKQEESESVRKEQVQQRAIECSRALSAILDIEHGDPKENVLGSAFDMKQLKDAIDETKIALMGHSFGGATVLQALSEDQRFRCGVALDPWMYPVNEELYSRTLQPLLFINSAKFQTPKDIAKMKKFYQPDKERKMITIKGSVHQNFDDFTFVTGKIIGNKLTLKGEIDSRVAIDLTNKASMAFLQKHLGLQKDFDQWDPLVEGDDENLIPGSPFDAVTQVPAQQHSPGSQTQN</sequence>
<gene>
    <name type="primary">Pla2g7</name>
    <name type="synonym">Pafah</name>
</gene>
<dbReference type="EC" id="3.1.1.47" evidence="5 6"/>
<dbReference type="EMBL" id="U34277">
    <property type="protein sequence ID" value="AAC52274.1"/>
    <property type="status" value="ALT_FRAME"/>
    <property type="molecule type" value="mRNA"/>
</dbReference>
<dbReference type="EMBL" id="AK051454">
    <property type="protein sequence ID" value="BAC34647.1"/>
    <property type="molecule type" value="mRNA"/>
</dbReference>
<dbReference type="EMBL" id="CT010585">
    <property type="status" value="NOT_ANNOTATED_CDS"/>
    <property type="molecule type" value="Genomic_DNA"/>
</dbReference>
<dbReference type="EMBL" id="CH466559">
    <property type="protein sequence ID" value="EDL23404.1"/>
    <property type="molecule type" value="Genomic_DNA"/>
</dbReference>
<dbReference type="EMBL" id="CH466559">
    <property type="protein sequence ID" value="EDL23406.1"/>
    <property type="molecule type" value="Genomic_DNA"/>
</dbReference>
<dbReference type="EMBL" id="BC010726">
    <property type="protein sequence ID" value="AAH10726.1"/>
    <property type="molecule type" value="mRNA"/>
</dbReference>
<dbReference type="CCDS" id="CCDS28796.1"/>
<dbReference type="RefSeq" id="NP_001412035.1">
    <property type="nucleotide sequence ID" value="NM_001425106.1"/>
</dbReference>
<dbReference type="RefSeq" id="NP_038765.2">
    <property type="nucleotide sequence ID" value="NM_013737.5"/>
</dbReference>
<dbReference type="RefSeq" id="XP_006524428.1">
    <property type="nucleotide sequence ID" value="XM_006524365.3"/>
</dbReference>
<dbReference type="RefSeq" id="XP_006524429.1">
    <property type="nucleotide sequence ID" value="XM_006524366.4"/>
</dbReference>
<dbReference type="SMR" id="Q60963"/>
<dbReference type="BioGRID" id="205147">
    <property type="interactions" value="4"/>
</dbReference>
<dbReference type="FunCoup" id="Q60963">
    <property type="interactions" value="83"/>
</dbReference>
<dbReference type="IntAct" id="Q60963">
    <property type="interactions" value="2"/>
</dbReference>
<dbReference type="STRING" id="10090.ENSMUSP00000024706"/>
<dbReference type="BindingDB" id="Q60963"/>
<dbReference type="ChEMBL" id="CHEMBL5383"/>
<dbReference type="ESTHER" id="mouse-pafa">
    <property type="family name" value="PAF-Acetylhydrolase"/>
</dbReference>
<dbReference type="GlyCosmos" id="Q60963">
    <property type="glycosylation" value="3 sites, No reported glycans"/>
</dbReference>
<dbReference type="GlyGen" id="Q60963">
    <property type="glycosylation" value="3 sites, 1 N-linked glycan (1 site)"/>
</dbReference>
<dbReference type="iPTMnet" id="Q60963"/>
<dbReference type="MetOSite" id="Q60963"/>
<dbReference type="PhosphoSitePlus" id="Q60963"/>
<dbReference type="CPTAC" id="non-CPTAC-3928"/>
<dbReference type="PaxDb" id="10090-ENSMUSP00000024706"/>
<dbReference type="PeptideAtlas" id="Q60963"/>
<dbReference type="ProteomicsDB" id="293996"/>
<dbReference type="Antibodypedia" id="30742">
    <property type="antibodies" value="377 antibodies from 32 providers"/>
</dbReference>
<dbReference type="DNASU" id="27226"/>
<dbReference type="Ensembl" id="ENSMUST00000024706.12">
    <property type="protein sequence ID" value="ENSMUSP00000024706.6"/>
    <property type="gene ID" value="ENSMUSG00000023913.18"/>
</dbReference>
<dbReference type="GeneID" id="27226"/>
<dbReference type="KEGG" id="mmu:27226"/>
<dbReference type="UCSC" id="uc008cpd.1">
    <property type="organism name" value="mouse"/>
</dbReference>
<dbReference type="AGR" id="MGI:1351327"/>
<dbReference type="CTD" id="7941"/>
<dbReference type="MGI" id="MGI:1351327">
    <property type="gene designation" value="Pla2g7"/>
</dbReference>
<dbReference type="VEuPathDB" id="HostDB:ENSMUSG00000023913"/>
<dbReference type="eggNOG" id="KOG3847">
    <property type="taxonomic scope" value="Eukaryota"/>
</dbReference>
<dbReference type="GeneTree" id="ENSGT00390000005233"/>
<dbReference type="HOGENOM" id="CLU_022501_0_1_1"/>
<dbReference type="InParanoid" id="Q60963"/>
<dbReference type="OMA" id="GSVHHNF"/>
<dbReference type="OrthoDB" id="2363873at2759"/>
<dbReference type="PhylomeDB" id="Q60963"/>
<dbReference type="TreeFam" id="TF313831"/>
<dbReference type="Reactome" id="R-MMU-422085">
    <property type="pathway name" value="Synthesis, secretion, and deacylation of Ghrelin"/>
</dbReference>
<dbReference type="BioGRID-ORCS" id="27226">
    <property type="hits" value="4 hits in 80 CRISPR screens"/>
</dbReference>
<dbReference type="ChiTaRS" id="Pla2g7">
    <property type="organism name" value="mouse"/>
</dbReference>
<dbReference type="PRO" id="PR:Q60963"/>
<dbReference type="Proteomes" id="UP000000589">
    <property type="component" value="Chromosome 17"/>
</dbReference>
<dbReference type="RNAct" id="Q60963">
    <property type="molecule type" value="protein"/>
</dbReference>
<dbReference type="Bgee" id="ENSMUSG00000023913">
    <property type="expression patterns" value="Expressed in stroma of bone marrow and 253 other cell types or tissues"/>
</dbReference>
<dbReference type="ExpressionAtlas" id="Q60963">
    <property type="expression patterns" value="baseline and differential"/>
</dbReference>
<dbReference type="GO" id="GO:0034364">
    <property type="term" value="C:high-density lipoprotein particle"/>
    <property type="evidence" value="ECO:0000250"/>
    <property type="project" value="UniProtKB"/>
</dbReference>
<dbReference type="GO" id="GO:0034362">
    <property type="term" value="C:low-density lipoprotein particle"/>
    <property type="evidence" value="ECO:0000250"/>
    <property type="project" value="UniProtKB"/>
</dbReference>
<dbReference type="GO" id="GO:0003847">
    <property type="term" value="F:1-alkyl-2-acetylglycerophosphocholine esterase activity"/>
    <property type="evidence" value="ECO:0000250"/>
    <property type="project" value="UniProtKB"/>
</dbReference>
<dbReference type="GO" id="GO:0047499">
    <property type="term" value="F:calcium-independent phospholipase A2 activity"/>
    <property type="evidence" value="ECO:0000250"/>
    <property type="project" value="UniProtKB"/>
</dbReference>
<dbReference type="GO" id="GO:0005543">
    <property type="term" value="F:phospholipid binding"/>
    <property type="evidence" value="ECO:0007669"/>
    <property type="project" value="Ensembl"/>
</dbReference>
<dbReference type="GO" id="GO:0006954">
    <property type="term" value="P:inflammatory response"/>
    <property type="evidence" value="ECO:0000304"/>
    <property type="project" value="MGI"/>
</dbReference>
<dbReference type="GO" id="GO:0034440">
    <property type="term" value="P:lipid oxidation"/>
    <property type="evidence" value="ECO:0007669"/>
    <property type="project" value="Ensembl"/>
</dbReference>
<dbReference type="GO" id="GO:0034374">
    <property type="term" value="P:low-density lipoprotein particle remodeling"/>
    <property type="evidence" value="ECO:0007669"/>
    <property type="project" value="Ensembl"/>
</dbReference>
<dbReference type="GO" id="GO:0034638">
    <property type="term" value="P:phosphatidylcholine catabolic process"/>
    <property type="evidence" value="ECO:0000250"/>
    <property type="project" value="UniProtKB"/>
</dbReference>
<dbReference type="GO" id="GO:0034441">
    <property type="term" value="P:plasma lipoprotein particle oxidation"/>
    <property type="evidence" value="ECO:0007669"/>
    <property type="project" value="Ensembl"/>
</dbReference>
<dbReference type="GO" id="GO:0062234">
    <property type="term" value="P:platelet activating factor catabolic process"/>
    <property type="evidence" value="ECO:0000250"/>
    <property type="project" value="UniProtKB"/>
</dbReference>
<dbReference type="GO" id="GO:0046469">
    <property type="term" value="P:platelet activating factor metabolic process"/>
    <property type="evidence" value="ECO:0000250"/>
    <property type="project" value="UniProtKB"/>
</dbReference>
<dbReference type="GO" id="GO:0090026">
    <property type="term" value="P:positive regulation of monocyte chemotaxis"/>
    <property type="evidence" value="ECO:0007669"/>
    <property type="project" value="Ensembl"/>
</dbReference>
<dbReference type="FunFam" id="3.40.50.1820:FF:000062">
    <property type="entry name" value="Platelet-activating factor acetylhydrolase"/>
    <property type="match status" value="1"/>
</dbReference>
<dbReference type="Gene3D" id="3.40.50.1820">
    <property type="entry name" value="alpha/beta hydrolase"/>
    <property type="match status" value="1"/>
</dbReference>
<dbReference type="InterPro" id="IPR029058">
    <property type="entry name" value="AB_hydrolase_fold"/>
</dbReference>
<dbReference type="InterPro" id="IPR016715">
    <property type="entry name" value="PAF_acetylhydro_eukaryote"/>
</dbReference>
<dbReference type="PANTHER" id="PTHR10272">
    <property type="entry name" value="PLATELET-ACTIVATING FACTOR ACETYLHYDROLASE"/>
    <property type="match status" value="1"/>
</dbReference>
<dbReference type="PANTHER" id="PTHR10272:SF12">
    <property type="entry name" value="PLATELET-ACTIVATING FACTOR ACETYLHYDROLASE"/>
    <property type="match status" value="1"/>
</dbReference>
<dbReference type="Pfam" id="PF03403">
    <property type="entry name" value="PAF-AH_p_II"/>
    <property type="match status" value="1"/>
</dbReference>
<dbReference type="PIRSF" id="PIRSF018169">
    <property type="entry name" value="PAF_acetylhydrolase"/>
    <property type="match status" value="1"/>
</dbReference>
<dbReference type="SUPFAM" id="SSF53474">
    <property type="entry name" value="alpha/beta-Hydrolases"/>
    <property type="match status" value="1"/>
</dbReference>
<dbReference type="PROSITE" id="PS00120">
    <property type="entry name" value="LIPASE_SER"/>
    <property type="match status" value="1"/>
</dbReference>
<proteinExistence type="evidence at protein level"/>
<feature type="signal peptide" evidence="1">
    <location>
        <begin position="1"/>
        <end position="21"/>
    </location>
</feature>
<feature type="chain" id="PRO_0000017834" description="Platelet-activating factor acetylhydrolase">
    <location>
        <begin position="22"/>
        <end position="440"/>
    </location>
</feature>
<feature type="active site" description="Nucleophile" evidence="1">
    <location>
        <position position="272"/>
    </location>
</feature>
<feature type="active site" description="Charge relay system" evidence="4">
    <location>
        <position position="295"/>
    </location>
</feature>
<feature type="active site" description="Charge relay system" evidence="4">
    <location>
        <position position="350"/>
    </location>
</feature>
<feature type="glycosylation site" description="N-linked (GlcNAc...) asparagine" evidence="3">
    <location>
        <position position="59"/>
    </location>
</feature>
<feature type="glycosylation site" description="N-linked (GlcNAc...) asparagine" evidence="3">
    <location>
        <position position="75"/>
    </location>
</feature>
<feature type="glycosylation site" description="N-linked (GlcNAc...) asparagine" evidence="3">
    <location>
        <position position="199"/>
    </location>
</feature>
<feature type="sequence conflict" description="In Ref. 3; EDL23404/EDL23406 and 4; AAH10726." evidence="8" ref="3 4">
    <original>V</original>
    <variation>A</variation>
    <location>
        <position position="427"/>
    </location>
</feature>
<comment type="function">
    <text evidence="2 5 6">Lipoprotein-associated calcium-independent phospholipase A2 involved in phospholipid catabolism during inflammatory and oxidative stress response (PubMed:10066756, PubMed:18434304). At the lipid-aqueous interface, hydrolyzes the ester bond of fatty acyl group attached at sn-2 position of phospholipids (phospholipase A2 activity) (PubMed:10066756, PubMed:18434304). Specifically targets phospholipids with a short-chain fatty acyl group at sn-2 position. Can hydrolyze phospholipids with long fatty acyl chains, only if they carry oxidized functional groups (By similarity). Hydrolyzes and inactivates platelet-activating factor (PAF, 1-O-alkyl-2-acetyl-sn-glycero-3-phosphocholine), a potent pro-inflammatory signaling lipid that acts through PTAFR on various innate immune cells (PubMed:10066756, PubMed:18434304). Hydrolyzes oxidatively truncated phospholipids carrying an aldehyde group at omega position, preventing their accumulation in lipoprotein particles and uncontrolled pro-inflammatory effects (By similarity). As part of high-density lipoprotein (HDL) particles, can hydrolyze phospholipids having long-chain fatty acyl hydroperoxides at sn-2 position and protect against potential accumulation of these oxylipins in the vascular wall (By similarity). Catalyzes the release from membrane phospholipids of F2-isoprostanes, lipid biomarkers of cellular oxidative damage (By similarity).</text>
</comment>
<comment type="catalytic activity">
    <reaction evidence="5 6">
        <text>a 1-O-alkyl-2-acetyl-sn-glycero-3-phosphocholine + H2O = a 1-O-alkyl-sn-glycero-3-phosphocholine + acetate + H(+)</text>
        <dbReference type="Rhea" id="RHEA:17777"/>
        <dbReference type="ChEBI" id="CHEBI:15377"/>
        <dbReference type="ChEBI" id="CHEBI:15378"/>
        <dbReference type="ChEBI" id="CHEBI:30089"/>
        <dbReference type="ChEBI" id="CHEBI:30909"/>
        <dbReference type="ChEBI" id="CHEBI:36707"/>
        <dbReference type="EC" id="3.1.1.47"/>
    </reaction>
    <physiologicalReaction direction="left-to-right" evidence="9 10">
        <dbReference type="Rhea" id="RHEA:17778"/>
    </physiologicalReaction>
</comment>
<comment type="catalytic activity">
    <reaction evidence="2">
        <text>1-O-decyl-2-acetyl-sn-glycero-3-phosphocholine + H2O = 1-O-decyl-sn-glycero-3-phosphocholine + acetate + H(+)</text>
        <dbReference type="Rhea" id="RHEA:41376"/>
        <dbReference type="ChEBI" id="CHEBI:15377"/>
        <dbReference type="ChEBI" id="CHEBI:15378"/>
        <dbReference type="ChEBI" id="CHEBI:30089"/>
        <dbReference type="ChEBI" id="CHEBI:78108"/>
        <dbReference type="ChEBI" id="CHEBI:78109"/>
    </reaction>
    <physiologicalReaction direction="left-to-right" evidence="2">
        <dbReference type="Rhea" id="RHEA:41377"/>
    </physiologicalReaction>
</comment>
<comment type="catalytic activity">
    <reaction evidence="2">
        <text>1-O-dodecyl-2-acetyl-sn-glycero-3-phosphocholine + H2O = 1-O-dodecyl-sn-glycero-3-phosphocholine + acetate + H(+)</text>
        <dbReference type="Rhea" id="RHEA:41372"/>
        <dbReference type="ChEBI" id="CHEBI:15377"/>
        <dbReference type="ChEBI" id="CHEBI:15378"/>
        <dbReference type="ChEBI" id="CHEBI:30089"/>
        <dbReference type="ChEBI" id="CHEBI:78103"/>
        <dbReference type="ChEBI" id="CHEBI:78104"/>
    </reaction>
    <physiologicalReaction direction="left-to-right" evidence="2">
        <dbReference type="Rhea" id="RHEA:41373"/>
    </physiologicalReaction>
</comment>
<comment type="catalytic activity">
    <reaction evidence="2">
        <text>1-O-tetradecyl-2-acetyl-sn-glycero-3-phosphocholine + H2O = 1-O-tetradecyl-sn-glycero-3-phosphocholine + acetate + H(+)</text>
        <dbReference type="Rhea" id="RHEA:41368"/>
        <dbReference type="ChEBI" id="CHEBI:15377"/>
        <dbReference type="ChEBI" id="CHEBI:15378"/>
        <dbReference type="ChEBI" id="CHEBI:30089"/>
        <dbReference type="ChEBI" id="CHEBI:78101"/>
        <dbReference type="ChEBI" id="CHEBI:78102"/>
    </reaction>
    <physiologicalReaction direction="left-to-right" evidence="2">
        <dbReference type="Rhea" id="RHEA:41369"/>
    </physiologicalReaction>
</comment>
<comment type="catalytic activity">
    <reaction evidence="2">
        <text>1-O-hexadecyl-2-acetyl-sn-glycero-3-phosphocholine + H2O = 1-O-hexadecyl-sn-glycero-3-phosphocholine + acetate + H(+)</text>
        <dbReference type="Rhea" id="RHEA:40479"/>
        <dbReference type="ChEBI" id="CHEBI:15377"/>
        <dbReference type="ChEBI" id="CHEBI:15378"/>
        <dbReference type="ChEBI" id="CHEBI:30089"/>
        <dbReference type="ChEBI" id="CHEBI:44811"/>
        <dbReference type="ChEBI" id="CHEBI:64496"/>
    </reaction>
    <physiologicalReaction direction="left-to-right" evidence="2">
        <dbReference type="Rhea" id="RHEA:40480"/>
    </physiologicalReaction>
</comment>
<comment type="catalytic activity">
    <reaction evidence="2">
        <text>1-O-octadecyl-2-acetyl-sn-glycero-3-phosphocholine + H2O = 1-O-octadecyl-sn-glycero-3-phosphocholine + acetate + H(+)</text>
        <dbReference type="Rhea" id="RHEA:41183"/>
        <dbReference type="ChEBI" id="CHEBI:15377"/>
        <dbReference type="ChEBI" id="CHEBI:15378"/>
        <dbReference type="ChEBI" id="CHEBI:30089"/>
        <dbReference type="ChEBI" id="CHEBI:52450"/>
        <dbReference type="ChEBI" id="CHEBI:75216"/>
    </reaction>
    <physiologicalReaction direction="left-to-right" evidence="2">
        <dbReference type="Rhea" id="RHEA:41184"/>
    </physiologicalReaction>
</comment>
<comment type="catalytic activity">
    <reaction evidence="2">
        <text>1-hexadecanoyl-2-acetyl-sn-glycero-3-phosphocholine + H2O = 1-hexadecanoyl-sn-glycero-3-phosphocholine + acetate + H(+)</text>
        <dbReference type="Rhea" id="RHEA:41203"/>
        <dbReference type="ChEBI" id="CHEBI:15377"/>
        <dbReference type="ChEBI" id="CHEBI:15378"/>
        <dbReference type="ChEBI" id="CHEBI:30089"/>
        <dbReference type="ChEBI" id="CHEBI:72998"/>
        <dbReference type="ChEBI" id="CHEBI:75219"/>
    </reaction>
    <physiologicalReaction direction="left-to-right" evidence="2">
        <dbReference type="Rhea" id="RHEA:41204"/>
    </physiologicalReaction>
</comment>
<comment type="catalytic activity">
    <reaction evidence="2">
        <text>1-hexadecanoyl-2-propionyl-sn-glycero-3-phosphocholine + H2O = propanoate + 1-hexadecanoyl-sn-glycero-3-phosphocholine + H(+)</text>
        <dbReference type="Rhea" id="RHEA:41191"/>
        <dbReference type="ChEBI" id="CHEBI:15377"/>
        <dbReference type="ChEBI" id="CHEBI:15378"/>
        <dbReference type="ChEBI" id="CHEBI:17272"/>
        <dbReference type="ChEBI" id="CHEBI:72998"/>
        <dbReference type="ChEBI" id="CHEBI:77831"/>
    </reaction>
    <physiologicalReaction direction="left-to-right" evidence="2">
        <dbReference type="Rhea" id="RHEA:41192"/>
    </physiologicalReaction>
</comment>
<comment type="catalytic activity">
    <reaction evidence="2">
        <text>1-hexadecanoyl-2-butanoyl-sn-glycero-3-phosphocholine + H2O = butanoate + 1-hexadecanoyl-sn-glycero-3-phosphocholine + H(+)</text>
        <dbReference type="Rhea" id="RHEA:41195"/>
        <dbReference type="ChEBI" id="CHEBI:15377"/>
        <dbReference type="ChEBI" id="CHEBI:15378"/>
        <dbReference type="ChEBI" id="CHEBI:17968"/>
        <dbReference type="ChEBI" id="CHEBI:72998"/>
        <dbReference type="ChEBI" id="CHEBI:77832"/>
    </reaction>
    <physiologicalReaction direction="left-to-right" evidence="2">
        <dbReference type="Rhea" id="RHEA:41196"/>
    </physiologicalReaction>
</comment>
<comment type="catalytic activity">
    <reaction evidence="2">
        <text>1-hexadecanoyl-2-pentanoyl-sn-glycero-3-phosphocholine + H2O = pentanoate + 1-hexadecanoyl-sn-glycero-3-phosphocholine + H(+)</text>
        <dbReference type="Rhea" id="RHEA:41199"/>
        <dbReference type="ChEBI" id="CHEBI:15377"/>
        <dbReference type="ChEBI" id="CHEBI:15378"/>
        <dbReference type="ChEBI" id="CHEBI:31011"/>
        <dbReference type="ChEBI" id="CHEBI:72998"/>
        <dbReference type="ChEBI" id="CHEBI:77833"/>
    </reaction>
    <physiologicalReaction direction="left-to-right" evidence="2">
        <dbReference type="Rhea" id="RHEA:41200"/>
    </physiologicalReaction>
</comment>
<comment type="catalytic activity">
    <reaction evidence="2">
        <text>1-hexadecanoyl-2-glutaroyl-sn-glycero-3-phosphocholine + H2O = glutarate + 1-hexadecanoyl-sn-glycero-3-phosphocholine + H(+)</text>
        <dbReference type="Rhea" id="RHEA:41159"/>
        <dbReference type="ChEBI" id="CHEBI:15377"/>
        <dbReference type="ChEBI" id="CHEBI:15378"/>
        <dbReference type="ChEBI" id="CHEBI:30921"/>
        <dbReference type="ChEBI" id="CHEBI:72998"/>
        <dbReference type="ChEBI" id="CHEBI:77756"/>
    </reaction>
    <physiologicalReaction direction="left-to-right" evidence="2">
        <dbReference type="Rhea" id="RHEA:41160"/>
    </physiologicalReaction>
</comment>
<comment type="catalytic activity">
    <reaction evidence="2">
        <text>1-hexadecanoyl-2-(5-oxopentanoyl)-sn-glycero-3-phosphocholine + H2O = 5-oxopentanoate + 1-hexadecanoyl-sn-glycero-3-phosphocholine + H(+)</text>
        <dbReference type="Rhea" id="RHEA:40483"/>
        <dbReference type="ChEBI" id="CHEBI:15377"/>
        <dbReference type="ChEBI" id="CHEBI:15378"/>
        <dbReference type="ChEBI" id="CHEBI:16120"/>
        <dbReference type="ChEBI" id="CHEBI:72998"/>
        <dbReference type="ChEBI" id="CHEBI:77890"/>
    </reaction>
    <physiologicalReaction direction="left-to-right" evidence="2">
        <dbReference type="Rhea" id="RHEA:40484"/>
    </physiologicalReaction>
</comment>
<comment type="catalytic activity">
    <reaction evidence="2">
        <text>1-hexadecanoyl-2-(9-oxononanoyl)-sn-glycero-3-phosphocholine + H2O = 9-oxononanoate + 1-hexadecanoyl-sn-glycero-3-phosphocholine + H(+)</text>
        <dbReference type="Rhea" id="RHEA:41179"/>
        <dbReference type="ChEBI" id="CHEBI:15377"/>
        <dbReference type="ChEBI" id="CHEBI:15378"/>
        <dbReference type="ChEBI" id="CHEBI:61042"/>
        <dbReference type="ChEBI" id="CHEBI:72998"/>
        <dbReference type="ChEBI" id="CHEBI:77812"/>
    </reaction>
    <physiologicalReaction direction="left-to-right" evidence="2">
        <dbReference type="Rhea" id="RHEA:41180"/>
    </physiologicalReaction>
</comment>
<comment type="catalytic activity">
    <reaction evidence="2">
        <text>1-hexadecanoyl-2-[9-hydroperoxy-(10E-octadecenoyl)]-sn-glycero-3-phosphocholine + H2O = 9-hydroperoxy-10E-octadecenoate + 1-hexadecanoyl-sn-glycero-3-phosphocholine + H(+)</text>
        <dbReference type="Rhea" id="RHEA:41151"/>
        <dbReference type="ChEBI" id="CHEBI:15377"/>
        <dbReference type="ChEBI" id="CHEBI:15378"/>
        <dbReference type="ChEBI" id="CHEBI:72998"/>
        <dbReference type="ChEBI" id="CHEBI:77753"/>
        <dbReference type="ChEBI" id="CHEBI:77754"/>
    </reaction>
    <physiologicalReaction direction="left-to-right" evidence="2">
        <dbReference type="Rhea" id="RHEA:41152"/>
    </physiologicalReaction>
</comment>
<comment type="catalytic activity">
    <reaction evidence="2">
        <text>1-hexadecanoyl-2-(10-hydroperoxy-8E-octadecenoyl)-sn-glycero-3-phosphocholine + H2O = 10-hydroperoxy-(8E)-octadecenoate + 1-hexadecanoyl-sn-glycero-3-phosphocholine + H(+)</text>
        <dbReference type="Rhea" id="RHEA:41155"/>
        <dbReference type="ChEBI" id="CHEBI:15377"/>
        <dbReference type="ChEBI" id="CHEBI:15378"/>
        <dbReference type="ChEBI" id="CHEBI:72998"/>
        <dbReference type="ChEBI" id="CHEBI:77749"/>
        <dbReference type="ChEBI" id="CHEBI:77755"/>
    </reaction>
    <physiologicalReaction direction="left-to-right" evidence="2">
        <dbReference type="Rhea" id="RHEA:41156"/>
    </physiologicalReaction>
</comment>
<comment type="subcellular location">
    <subcellularLocation>
        <location evidence="6">Secreted</location>
        <location evidence="6">Extracellular space</location>
    </subcellularLocation>
    <text evidence="6">Associates with HDL particles in plasma.</text>
</comment>
<comment type="tissue specificity">
    <text evidence="6">Plasma.</text>
</comment>
<comment type="PTM">
    <text evidence="2">N-glycosylated.</text>
</comment>
<comment type="disruption phenotype">
    <text evidence="7">Mutant mice show increased susceptibility to neonatal necrotizing enterocolitis in response to formula feeding, bacterial colonization, and asphyxia/ cold stress.</text>
</comment>
<comment type="similarity">
    <text evidence="8">Belongs to the AB hydrolase superfamily. Lipase family.</text>
</comment>
<comment type="sequence caution" evidence="8">
    <conflict type="frameshift">
        <sequence resource="EMBL-CDS" id="AAC52274"/>
    </conflict>
</comment>
<name>PAFA_MOUSE</name>
<accession>Q60963</accession>
<accession>Q8BKM3</accession>
<accession>Q921T4</accession>
<keyword id="KW-0325">Glycoprotein</keyword>
<keyword id="KW-0345">HDL</keyword>
<keyword id="KW-0378">Hydrolase</keyword>
<keyword id="KW-0442">Lipid degradation</keyword>
<keyword id="KW-0443">Lipid metabolism</keyword>
<keyword id="KW-0595">Phospholipid degradation</keyword>
<keyword id="KW-1208">Phospholipid metabolism</keyword>
<keyword id="KW-1185">Reference proteome</keyword>
<keyword id="KW-0964">Secreted</keyword>
<keyword id="KW-0732">Signal</keyword>
<organism>
    <name type="scientific">Mus musculus</name>
    <name type="common">Mouse</name>
    <dbReference type="NCBI Taxonomy" id="10090"/>
    <lineage>
        <taxon>Eukaryota</taxon>
        <taxon>Metazoa</taxon>
        <taxon>Chordata</taxon>
        <taxon>Craniata</taxon>
        <taxon>Vertebrata</taxon>
        <taxon>Euteleostomi</taxon>
        <taxon>Mammalia</taxon>
        <taxon>Eutheria</taxon>
        <taxon>Euarchontoglires</taxon>
        <taxon>Glires</taxon>
        <taxon>Rodentia</taxon>
        <taxon>Myomorpha</taxon>
        <taxon>Muroidea</taxon>
        <taxon>Muridae</taxon>
        <taxon>Murinae</taxon>
        <taxon>Mus</taxon>
        <taxon>Mus</taxon>
    </lineage>
</organism>
<protein>
    <recommendedName>
        <fullName>Platelet-activating factor acetylhydrolase</fullName>
        <shortName>PAF acetylhydrolase</shortName>
        <ecNumber evidence="5 6">3.1.1.47</ecNumber>
    </recommendedName>
    <alternativeName>
        <fullName>1-alkyl-2-acetylglycerophosphocholine esterase</fullName>
    </alternativeName>
    <alternativeName>
        <fullName>2-acetyl-1-alkylglycerophosphocholine esterase</fullName>
    </alternativeName>
    <alternativeName>
        <fullName>LDL-associated phospholipase A2</fullName>
        <shortName>LDL-PLA(2)</shortName>
    </alternativeName>
    <alternativeName>
        <fullName>PAF 2-acylhydrolase</fullName>
    </alternativeName>
</protein>